<comment type="function">
    <text evidence="3 10 11">Component of neuronal acetylcholine receptors (nAChRs) that function as pentameric, ligand-gated cation channels with high calcium permeability among other activities. nAChRs are excitatory neurotrasnmitter receptors formed by a collection of nAChR subunits known to mediate synaptic transmission in the nervous system and the neuromuscular junction. Each nAchR subunit confers differential attributes to channel properties, including activation, deactivation and desensitization kinetics, pH sensitivity, cation permeability, and binding to allosteric modulators (PubMed:22250215, PubMed:22561751). CHRNA3 forms heteropentameric neuronal acetylcholine receptors with CHRNB2 and CHRNB4 (PubMed:22561751). CHRNA3:CHRNB4 being predominant in neurons of the autonomic ganglia, it is known as ganglionic nicotinic receptor (PubMed:22561751). CHRNA3:CHRNB4 also plays an important role in the habenulo-interpeduncular tract, modulating the mesolimbic dopamine system and affecting reward circuits and addiction (PubMed:22561751). Hypothalamic CHRNA3:CHRNB4 nAChR activation by nicotine leads to activation of POMC neurons and a decrease in food intake (By similarity). Also expressed in the urothelium where it modulates reflex bladder activity by increasing intracellular calcium through extracellular influx and basal ATP release (PubMed:22250215).</text>
</comment>
<comment type="catalytic activity">
    <reaction evidence="14">
        <text>Ca(2+)(in) = Ca(2+)(out)</text>
        <dbReference type="Rhea" id="RHEA:29671"/>
        <dbReference type="ChEBI" id="CHEBI:29108"/>
    </reaction>
</comment>
<comment type="catalytic activity">
    <reaction evidence="1">
        <text>K(+)(in) = K(+)(out)</text>
        <dbReference type="Rhea" id="RHEA:29463"/>
        <dbReference type="ChEBI" id="CHEBI:29103"/>
    </reaction>
</comment>
<comment type="catalytic activity">
    <reaction evidence="1">
        <text>Na(+)(in) = Na(+)(out)</text>
        <dbReference type="Rhea" id="RHEA:34963"/>
        <dbReference type="ChEBI" id="CHEBI:29101"/>
    </reaction>
</comment>
<comment type="activity regulation">
    <text evidence="5 6 7 8 10 11">Activated by a myriad of ligands such as acetylcholine, cytisine, nicotine, choline and epibatidine (PubMed:10465681, PubMed:22250215). The heteropentamer CHRNA3:CHRNB2 activity is blocked by alpha-conotoxins ImI, ImII, PnIA, GID and MII (PubMed:16964981). The heteropentamer CHRNA3:CHRNB4 activity is blocked by the alpha-conotoxin ImI and AuIB (PubMed:15609996, PubMed:15929983, PubMed:22561751).</text>
</comment>
<comment type="subunit">
    <text evidence="2 5 6 7 9 11 12">Neuronal AChR is composed of two different types of subunits: alpha and beta. CHRNA3/Alpha-3 subunit can be combined to CHRNB2/beta-2 or CHRNB4/beta-4 to give rise to functional receptors (PubMed:10465681, PubMed:22561751). Part of a complex composed of STUB1/CHIP, VCP/p97, CHRNA3, and UBXN2A that modulates the ubiquitination and endoplasmic reticulum-associated degradation (ERAD) of CHRNA3 (PubMed:26265139). Within the complex UBXN2A acts as a scaffold protein required for the interaction of CHRNA3 with VCP/p97, this interaction also inhibits CHRNA3 ubiquitination by STUB1/CHIP and subsequently ERAD (PubMed:26265139). Interacts with UBXN2A (via SEP domain), the interaction is required for the interaction of CHRNA3 in the STUB1:VCP:UBXN2A complex (PubMed:19474315). Interacts with RIC3; which is required for proper folding and assembly.</text>
</comment>
<comment type="subcellular location">
    <subcellularLocation>
        <location evidence="13">Synaptic cell membrane</location>
        <topology evidence="4">Multi-pass membrane protein</topology>
    </subcellularLocation>
    <subcellularLocation>
        <location evidence="9">Cell membrane</location>
        <topology evidence="4">Multi-pass membrane protein</topology>
    </subcellularLocation>
    <subcellularLocation>
        <location evidence="9">Endoplasmic reticulum</location>
    </subcellularLocation>
    <subcellularLocation>
        <location evidence="9">Golgi apparatus</location>
    </subcellularLocation>
    <text evidence="9">Interaction with UBXN2A/UBXD4 promotes translocation to the plasma membrane.</text>
</comment>
<comment type="tissue specificity">
    <text evidence="10 11">Expressed in neurons (PubMed:22561751). Expressed in umbrella cells of urothelium (at protein level) (PubMed:22250215).</text>
</comment>
<comment type="PTM">
    <text evidence="9 12">Ubiquitinated; by STUB1/CHIP and thereafter degraded by the 26S proteosome complex.</text>
</comment>
<comment type="similarity">
    <text evidence="13">Belongs to the ligand-gated ion channel (TC 1.A.9) family. Acetylcholine receptor (TC 1.A.9.1) subfamily. Alpha-3/CHRNA3 sub-subfamily.</text>
</comment>
<keyword id="KW-1003">Cell membrane</keyword>
<keyword id="KW-1015">Disulfide bond</keyword>
<keyword id="KW-0256">Endoplasmic reticulum</keyword>
<keyword id="KW-0325">Glycoprotein</keyword>
<keyword id="KW-0333">Golgi apparatus</keyword>
<keyword id="KW-0407">Ion channel</keyword>
<keyword id="KW-0406">Ion transport</keyword>
<keyword id="KW-1071">Ligand-gated ion channel</keyword>
<keyword id="KW-0472">Membrane</keyword>
<keyword id="KW-0479">Metal-binding</keyword>
<keyword id="KW-0597">Phosphoprotein</keyword>
<keyword id="KW-0675">Receptor</keyword>
<keyword id="KW-1185">Reference proteome</keyword>
<keyword id="KW-0732">Signal</keyword>
<keyword id="KW-0915">Sodium</keyword>
<keyword id="KW-0770">Synapse</keyword>
<keyword id="KW-0812">Transmembrane</keyword>
<keyword id="KW-1133">Transmembrane helix</keyword>
<keyword id="KW-0813">Transport</keyword>
<keyword id="KW-0832">Ubl conjugation</keyword>
<gene>
    <name type="primary">Chrna3</name>
    <name type="synonym">Acra3</name>
</gene>
<protein>
    <recommendedName>
        <fullName>Neuronal acetylcholine receptor subunit alpha-3</fullName>
    </recommendedName>
</protein>
<name>ACHA3_RAT</name>
<feature type="signal peptide" evidence="4">
    <location>
        <begin position="1"/>
        <end position="25"/>
    </location>
</feature>
<feature type="chain" id="PRO_0000000348" description="Neuronal acetylcholine receptor subunit alpha-3">
    <location>
        <begin position="26"/>
        <end position="499"/>
    </location>
</feature>
<feature type="topological domain" description="Extracellular" evidence="2">
    <location>
        <begin position="26"/>
        <end position="244"/>
    </location>
</feature>
<feature type="transmembrane region" description="Helical" evidence="2">
    <location>
        <begin position="245"/>
        <end position="260"/>
    </location>
</feature>
<feature type="topological domain" description="Cytoplasmic">
    <location>
        <begin position="261"/>
        <end position="262"/>
    </location>
</feature>
<feature type="transmembrane region" description="Helical" evidence="2">
    <location>
        <begin position="263"/>
        <end position="279"/>
    </location>
</feature>
<feature type="topological domain" description="Extracellular" evidence="2">
    <location>
        <begin position="280"/>
        <end position="301"/>
    </location>
</feature>
<feature type="transmembrane region" description="Helical" evidence="2">
    <location>
        <begin position="302"/>
        <end position="320"/>
    </location>
</feature>
<feature type="topological domain" description="Cytoplasmic">
    <location>
        <begin position="321"/>
        <end position="468"/>
    </location>
</feature>
<feature type="transmembrane region" description="Helical" evidence="2">
    <location>
        <begin position="469"/>
        <end position="487"/>
    </location>
</feature>
<feature type="topological domain" description="Extracellular" evidence="2">
    <location>
        <begin position="488"/>
        <end position="499"/>
    </location>
</feature>
<feature type="binding site" evidence="2">
    <location>
        <position position="265"/>
    </location>
    <ligand>
        <name>Na(+)</name>
        <dbReference type="ChEBI" id="CHEBI:29101"/>
    </ligand>
</feature>
<feature type="modified residue" description="Phosphoserine" evidence="15">
    <location>
        <position position="407"/>
    </location>
</feature>
<feature type="modified residue" description="Phosphoserine" evidence="15">
    <location>
        <position position="410"/>
    </location>
</feature>
<feature type="glycosylation site" description="N-linked (GlcNAc...) asparagine" evidence="4">
    <location>
        <position position="49"/>
    </location>
</feature>
<feature type="glycosylation site" description="N-linked (GlcNAc...) asparagine" evidence="4">
    <location>
        <position position="166"/>
    </location>
</feature>
<feature type="disulfide bond" evidence="2">
    <location>
        <begin position="153"/>
        <end position="167"/>
    </location>
</feature>
<feature type="disulfide bond" description="Associated with receptor activation" evidence="2">
    <location>
        <begin position="217"/>
        <end position="218"/>
    </location>
</feature>
<sequence length="499" mass="56998">MGVVLLPPPLSMLMLVLMLLPAASASEAEHRLFQYLFEDYNEIIRPVANVSHPVIIQFEVSMSQLVKVDEVNQIMETNLWLKQIWNDYKLKWKPSDYQGVEFMRVPAEKIWKPDIVLYNNADGDFQVDDKTKALLKYTGEVTWIPPAIFKSSCKIDVTYFPFDYQNCTMKFGSWSYDKAKIDLVLIGSSMNLKDYWESGEWAIIKAPGYKHEIKYNCCEEIYQDITYSLYIRRLPLFYTINLIIPCLLISFLTVLVFYLPSDCGEKVTLCISVLLSLTVFLLVITETIPSTSLVIPLIGEYLLFTMIFVTLSIVITVFVLNVHYRTPTTHTMPTWVKAVFLNLLPRVMFMTRPTSGEGDTPKTRTFYGAELSNLNCFSRADSKSCKEGYPCQDGTCGYCHHRRVKISNFSANLTRSSSSESVNAVLSLSALSPEIKEAIQSVKYIAENMKAQNVAKEIQDDWKYVAMVIDRIFLWVFILVCILGTAGLFLQPLMARDDT</sequence>
<proteinExistence type="evidence at protein level"/>
<reference key="1">
    <citation type="journal article" date="1986" name="Nature">
        <title>Isolation of a cDNA clone coding for a possible neural nicotinic acetylcholine receptor alpha-subunit.</title>
        <authorList>
            <person name="Boulter J."/>
            <person name="Evans K."/>
            <person name="Goldman D.J."/>
            <person name="Martin G."/>
            <person name="Treco D."/>
            <person name="Heinemann S.F."/>
            <person name="Patrick J."/>
        </authorList>
    </citation>
    <scope>NUCLEOTIDE SEQUENCE [MRNA]</scope>
</reference>
<reference key="2">
    <citation type="journal article" date="1987" name="Proc. Natl. Acad. Sci. U.S.A.">
        <title>Functional expression of two neuronal nicotinic acetylcholine receptors from cDNA clones identifies a gene family.</title>
        <authorList>
            <person name="Boulter J."/>
            <person name="Connolly J.G."/>
            <person name="Deneris E.S."/>
            <person name="Goldman D.J."/>
            <person name="Heinemann S.F."/>
            <person name="Patrick J."/>
        </authorList>
    </citation>
    <scope>NUCLEOTIDE SEQUENCE [MRNA]</scope>
</reference>
<reference key="3">
    <citation type="journal article" date="1994" name="J. Biol. Chem.">
        <title>Characterization of an acetylcholine receptor alpha 3 gene promoter and its activation by the POU domain factor SCIP/Tst-1.</title>
        <authorList>
            <person name="Yang X."/>
            <person name="McDonough J."/>
            <person name="Fyodorov D."/>
            <person name="Morris M."/>
            <person name="Wang F."/>
            <person name="Deneris E.S."/>
        </authorList>
    </citation>
    <scope>NUCLEOTIDE SEQUENCE [GENOMIC DNA] OF 1-21</scope>
    <source>
        <tissue>Liver</tissue>
    </source>
</reference>
<reference key="4">
    <citation type="journal article" date="1999" name="Neuropharmacology">
        <title>Alpha3beta4 subunit-containing nicotinic receptors dominate function in rat medial habenula neurons.</title>
        <authorList>
            <person name="Quick M.W."/>
            <person name="Ceballos R.M."/>
            <person name="Kasten M."/>
            <person name="McIntosh J.M."/>
            <person name="Lester R.A."/>
        </authorList>
    </citation>
    <scope>ACTIVITY REGULATION</scope>
    <scope>FUNCTION</scope>
    <scope>SUBUNIT</scope>
</reference>
<reference key="5">
    <citation type="journal article" date="2004" name="Biochemistry">
        <title>Alpha-conotoxins ImI and ImII target distinct regions of the human alpha7 nicotinic acetylcholine receptor and distinguish human nicotinic receptor subtypes.</title>
        <authorList>
            <person name="Ellison M."/>
            <person name="Gao F."/>
            <person name="Wang H.L."/>
            <person name="Sine S.M."/>
            <person name="McIntosh J.M."/>
            <person name="Olivera B.M."/>
        </authorList>
    </citation>
    <scope>ACTIVITY REGULATION</scope>
</reference>
<reference key="6">
    <citation type="journal article" date="2005" name="J. Biol. Chem.">
        <title>Beta2 subunit contribution to 4/7 alpha-conotoxin binding to the nicotinic acetylcholine receptor.</title>
        <authorList>
            <person name="Dutertre S."/>
            <person name="Nicke A."/>
            <person name="Lewis R.J."/>
        </authorList>
    </citation>
    <scope>ACTIVITY REGULATION</scope>
</reference>
<reference key="7">
    <citation type="journal article" date="2006" name="Proc. Natl. Acad. Sci. U.S.A.">
        <title>Quantitative phosphoproteomics of vasopressin-sensitive renal cells: regulation of aquaporin-2 phosphorylation at two sites.</title>
        <authorList>
            <person name="Hoffert J.D."/>
            <person name="Pisitkun T."/>
            <person name="Wang G."/>
            <person name="Shen R.-F."/>
            <person name="Knepper M.A."/>
        </authorList>
    </citation>
    <scope>PHOSPHORYLATION [LARGE SCALE ANALYSIS] AT SER-407 AND SER-410</scope>
    <scope>IDENTIFICATION BY MASS SPECTROMETRY [LARGE SCALE ANALYSIS]</scope>
</reference>
<reference key="8">
    <citation type="journal article" date="2006" name="Biochemistry">
        <title>Determinants of alpha-conotoxin BuIA selectivity on the nicotinic acetylcholine receptor beta subunit.</title>
        <authorList>
            <person name="Shiembob D.L."/>
            <person name="Roberts R.L."/>
            <person name="Luetje C.W."/>
            <person name="McIntosh J.M."/>
        </authorList>
    </citation>
    <scope>ACTIVITY REGULATION</scope>
    <scope>SITES LYS-81; ILE-133 AND GLN-141</scope>
</reference>
<reference key="9">
    <citation type="journal article" date="2009" name="J. Neurosci.">
        <title>UBXD4, a UBX-containing protein, regulates the cell surface number and stability of alpha3-containing nicotinic acetylcholine receptors.</title>
        <authorList>
            <person name="Rezvani K."/>
            <person name="Teng Y."/>
            <person name="Pan Y."/>
            <person name="Dani J.A."/>
            <person name="Lindstrom J."/>
            <person name="Garcia Gras E.A."/>
            <person name="McIntosh J.M."/>
            <person name="De Biasi M."/>
        </authorList>
    </citation>
    <scope>INTERACTION WITH UBXN2A</scope>
    <scope>SUBCELLULAR LOCATION</scope>
    <scope>UBIQUITINATION</scope>
</reference>
<reference key="10">
    <citation type="journal article" date="2012" name="J. Physiol. (Lond.)">
        <title>Differential expression and function of nicotinic acetylcholine receptors in the urinary bladder epithelium of the rat.</title>
        <authorList>
            <person name="Beckel J.M."/>
            <person name="Birder L.A."/>
        </authorList>
    </citation>
    <scope>FUNCTION</scope>
    <scope>CATALYTIC ACTIVITY</scope>
    <scope>TISSUE SPECIFICITY</scope>
    <scope>ACTIVITY REGULATION</scope>
</reference>
<reference key="11">
    <citation type="journal article" date="2012" name="Neuropharmacology">
        <title>alpha3beta4 nicotinic acetylcholine receptors in the medial habenula modulate the mesolimbic dopaminergic response to acute nicotine in vivo.</title>
        <authorList>
            <person name="McCallum S.E."/>
            <person name="Cowe M.A."/>
            <person name="Lewis S.W."/>
            <person name="Glick S.D."/>
        </authorList>
    </citation>
    <scope>FUNCTION</scope>
    <scope>SUBUNIT</scope>
    <scope>ACTIVITY REGULATION</scope>
</reference>
<reference key="12">
    <citation type="journal article" date="2015" name="Biochem. Pharmacol.">
        <title>UBXN2A regulates nicotinic receptor degradation by modulating the E3 ligase activity of CHIP.</title>
        <authorList>
            <person name="Teng Y."/>
            <person name="Rezvani K."/>
            <person name="De Biasi M."/>
        </authorList>
    </citation>
    <scope>IDENTIFICATION IN A COMPLEX WITH STUB1; VCP AND UBXN2A</scope>
    <scope>UBIQUITINATION</scope>
</reference>
<accession>P04757</accession>
<dbReference type="EMBL" id="X03440">
    <property type="protein sequence ID" value="CAA27170.1"/>
    <property type="molecule type" value="mRNA"/>
</dbReference>
<dbReference type="EMBL" id="L31621">
    <property type="protein sequence ID" value="AAA41673.1"/>
    <property type="molecule type" value="mRNA"/>
</dbReference>
<dbReference type="EMBL" id="U04961">
    <property type="protein sequence ID" value="AAA18001.1"/>
    <property type="molecule type" value="Unassigned_DNA"/>
</dbReference>
<dbReference type="PIR" id="A24572">
    <property type="entry name" value="A24572"/>
</dbReference>
<dbReference type="PIR" id="A53733">
    <property type="entry name" value="A53733"/>
</dbReference>
<dbReference type="SMR" id="P04757"/>
<dbReference type="ComplexPortal" id="CPX-190">
    <property type="entry name" value="Neuronal nicotinic acetylcholine receptor complex, alpha3-alpha5-beta2"/>
</dbReference>
<dbReference type="ComplexPortal" id="CPX-191">
    <property type="entry name" value="Neuronal nicotinic acetylcholine receptor complex, alpha3-beta2"/>
</dbReference>
<dbReference type="ComplexPortal" id="CPX-203">
    <property type="entry name" value="Neuronal nicotinic acetylcholine receptor complex, alpha3-alpha6-beta2-beta3"/>
</dbReference>
<dbReference type="ComplexPortal" id="CPX-205">
    <property type="entry name" value="Neuronal nicotinic acetylcholine receptor complex, alpha3-beta4"/>
</dbReference>
<dbReference type="ComplexPortal" id="CPX-208">
    <property type="entry name" value="Neuronal nicotinic acetylcholine receptor complex, alpha3-alpha5-beta4"/>
</dbReference>
<dbReference type="ComplexPortal" id="CPX-211">
    <property type="entry name" value="Neuronal nicotinic acetylcholine receptor complex, alpha3-alpha6-beta4"/>
</dbReference>
<dbReference type="FunCoup" id="P04757">
    <property type="interactions" value="274"/>
</dbReference>
<dbReference type="IntAct" id="P04757">
    <property type="interactions" value="3"/>
</dbReference>
<dbReference type="STRING" id="10116.ENSRNOP00000019307"/>
<dbReference type="BindingDB" id="P04757"/>
<dbReference type="ChEMBL" id="CHEMBL1907587"/>
<dbReference type="ChEMBL" id="CHEMBL1907593"/>
<dbReference type="ChEMBL" id="CHEMBL3137275"/>
<dbReference type="ChEMBL" id="CHEMBL3137276"/>
<dbReference type="ChEMBL" id="CHEMBL4106146"/>
<dbReference type="DrugCentral" id="P04757"/>
<dbReference type="GuidetoPHARMACOLOGY" id="464"/>
<dbReference type="GlyCosmos" id="P04757">
    <property type="glycosylation" value="2 sites, No reported glycans"/>
</dbReference>
<dbReference type="GlyGen" id="P04757">
    <property type="glycosylation" value="2 sites"/>
</dbReference>
<dbReference type="iPTMnet" id="P04757"/>
<dbReference type="PhosphoSitePlus" id="P04757"/>
<dbReference type="PaxDb" id="10116-ENSRNOP00000019307"/>
<dbReference type="UCSC" id="RGD:2345">
    <property type="organism name" value="rat"/>
</dbReference>
<dbReference type="AGR" id="RGD:2345"/>
<dbReference type="RGD" id="2345">
    <property type="gene designation" value="Chrna3"/>
</dbReference>
<dbReference type="eggNOG" id="KOG3645">
    <property type="taxonomic scope" value="Eukaryota"/>
</dbReference>
<dbReference type="InParanoid" id="P04757"/>
<dbReference type="PhylomeDB" id="P04757"/>
<dbReference type="Reactome" id="R-RNO-629587">
    <property type="pathway name" value="Highly sodium permeable postsynaptic acetylcholine nicotinic receptors"/>
</dbReference>
<dbReference type="Reactome" id="R-RNO-629594">
    <property type="pathway name" value="Highly calcium permeable postsynaptic nicotinic acetylcholine receptors"/>
</dbReference>
<dbReference type="Reactome" id="R-RNO-629597">
    <property type="pathway name" value="Highly calcium permeable nicotinic acetylcholine receptors"/>
</dbReference>
<dbReference type="PRO" id="PR:P04757"/>
<dbReference type="Proteomes" id="UP000002494">
    <property type="component" value="Unplaced"/>
</dbReference>
<dbReference type="GO" id="GO:0005892">
    <property type="term" value="C:acetylcholine-gated channel complex"/>
    <property type="evidence" value="ECO:0000314"/>
    <property type="project" value="RGD"/>
</dbReference>
<dbReference type="GO" id="GO:0098981">
    <property type="term" value="C:cholinergic synapse"/>
    <property type="evidence" value="ECO:0000314"/>
    <property type="project" value="SynGO"/>
</dbReference>
<dbReference type="GO" id="GO:0030425">
    <property type="term" value="C:dendrite"/>
    <property type="evidence" value="ECO:0000314"/>
    <property type="project" value="RGD"/>
</dbReference>
<dbReference type="GO" id="GO:0098691">
    <property type="term" value="C:dopaminergic synapse"/>
    <property type="evidence" value="ECO:0000314"/>
    <property type="project" value="SynGO"/>
</dbReference>
<dbReference type="GO" id="GO:0005783">
    <property type="term" value="C:endoplasmic reticulum"/>
    <property type="evidence" value="ECO:0007669"/>
    <property type="project" value="UniProtKB-SubCell"/>
</dbReference>
<dbReference type="GO" id="GO:0005794">
    <property type="term" value="C:Golgi apparatus"/>
    <property type="evidence" value="ECO:0007669"/>
    <property type="project" value="UniProtKB-SubCell"/>
</dbReference>
<dbReference type="GO" id="GO:0043005">
    <property type="term" value="C:neuron projection"/>
    <property type="evidence" value="ECO:0000318"/>
    <property type="project" value="GO_Central"/>
</dbReference>
<dbReference type="GO" id="GO:0043025">
    <property type="term" value="C:neuronal cell body"/>
    <property type="evidence" value="ECO:0000314"/>
    <property type="project" value="RGD"/>
</dbReference>
<dbReference type="GO" id="GO:0005886">
    <property type="term" value="C:plasma membrane"/>
    <property type="evidence" value="ECO:0000318"/>
    <property type="project" value="GO_Central"/>
</dbReference>
<dbReference type="GO" id="GO:0044853">
    <property type="term" value="C:plasma membrane raft"/>
    <property type="evidence" value="ECO:0000316"/>
    <property type="project" value="ARUK-UCL"/>
</dbReference>
<dbReference type="GO" id="GO:0099634">
    <property type="term" value="C:postsynaptic specialization membrane"/>
    <property type="evidence" value="ECO:0000314"/>
    <property type="project" value="SynGO"/>
</dbReference>
<dbReference type="GO" id="GO:0098793">
    <property type="term" value="C:presynapse"/>
    <property type="evidence" value="ECO:0007669"/>
    <property type="project" value="GOC"/>
</dbReference>
<dbReference type="GO" id="GO:0032991">
    <property type="term" value="C:protein-containing complex"/>
    <property type="evidence" value="ECO:0000314"/>
    <property type="project" value="RGD"/>
</dbReference>
<dbReference type="GO" id="GO:0045202">
    <property type="term" value="C:synapse"/>
    <property type="evidence" value="ECO:0000318"/>
    <property type="project" value="GO_Central"/>
</dbReference>
<dbReference type="GO" id="GO:0042166">
    <property type="term" value="F:acetylcholine binding"/>
    <property type="evidence" value="ECO:0000314"/>
    <property type="project" value="RGD"/>
</dbReference>
<dbReference type="GO" id="GO:0015464">
    <property type="term" value="F:acetylcholine receptor activity"/>
    <property type="evidence" value="ECO:0000314"/>
    <property type="project" value="RGD"/>
</dbReference>
<dbReference type="GO" id="GO:0022848">
    <property type="term" value="F:acetylcholine-gated monoatomic cation-selective channel activity"/>
    <property type="evidence" value="ECO:0000315"/>
    <property type="project" value="RGD"/>
</dbReference>
<dbReference type="GO" id="GO:1901363">
    <property type="term" value="F:heterocyclic compound binding"/>
    <property type="evidence" value="ECO:0000314"/>
    <property type="project" value="RGD"/>
</dbReference>
<dbReference type="GO" id="GO:0044877">
    <property type="term" value="F:protein-containing complex binding"/>
    <property type="evidence" value="ECO:0000314"/>
    <property type="project" value="RGD"/>
</dbReference>
<dbReference type="GO" id="GO:1904315">
    <property type="term" value="F:transmitter-gated monoatomic ion channel activity involved in regulation of postsynaptic membrane potential"/>
    <property type="evidence" value="ECO:0000266"/>
    <property type="project" value="RGD"/>
</dbReference>
<dbReference type="GO" id="GO:0095500">
    <property type="term" value="P:acetylcholine receptor signaling pathway"/>
    <property type="evidence" value="ECO:0000316"/>
    <property type="project" value="ARUK-UCL"/>
</dbReference>
<dbReference type="GO" id="GO:0035095">
    <property type="term" value="P:behavioral response to nicotine"/>
    <property type="evidence" value="ECO:0000266"/>
    <property type="project" value="RGD"/>
</dbReference>
<dbReference type="GO" id="GO:0060079">
    <property type="term" value="P:excitatory postsynaptic potential"/>
    <property type="evidence" value="ECO:0000266"/>
    <property type="project" value="RGD"/>
</dbReference>
<dbReference type="GO" id="GO:0007507">
    <property type="term" value="P:heart development"/>
    <property type="evidence" value="ECO:0000270"/>
    <property type="project" value="RGD"/>
</dbReference>
<dbReference type="GO" id="GO:0007626">
    <property type="term" value="P:locomotory behavior"/>
    <property type="evidence" value="ECO:0000266"/>
    <property type="project" value="RGD"/>
</dbReference>
<dbReference type="GO" id="GO:0051899">
    <property type="term" value="P:membrane depolarization"/>
    <property type="evidence" value="ECO:0000318"/>
    <property type="project" value="GO_Central"/>
</dbReference>
<dbReference type="GO" id="GO:0034220">
    <property type="term" value="P:monoatomic ion transmembrane transport"/>
    <property type="evidence" value="ECO:0000318"/>
    <property type="project" value="GO_Central"/>
</dbReference>
<dbReference type="GO" id="GO:0007399">
    <property type="term" value="P:nervous system development"/>
    <property type="evidence" value="ECO:0000266"/>
    <property type="project" value="RGD"/>
</dbReference>
<dbReference type="GO" id="GO:0007274">
    <property type="term" value="P:neuromuscular synaptic transmission"/>
    <property type="evidence" value="ECO:0000318"/>
    <property type="project" value="GO_Central"/>
</dbReference>
<dbReference type="GO" id="GO:0099171">
    <property type="term" value="P:presynaptic modulation of chemical synaptic transmission"/>
    <property type="evidence" value="ECO:0000314"/>
    <property type="project" value="SynGO"/>
</dbReference>
<dbReference type="GO" id="GO:0014056">
    <property type="term" value="P:regulation of acetylcholine secretion, neurotransmission"/>
    <property type="evidence" value="ECO:0000266"/>
    <property type="project" value="RGD"/>
</dbReference>
<dbReference type="GO" id="GO:0048814">
    <property type="term" value="P:regulation of dendrite morphogenesis"/>
    <property type="evidence" value="ECO:0000266"/>
    <property type="project" value="RGD"/>
</dbReference>
<dbReference type="GO" id="GO:0042391">
    <property type="term" value="P:regulation of membrane potential"/>
    <property type="evidence" value="ECO:0000266"/>
    <property type="project" value="RGD"/>
</dbReference>
<dbReference type="GO" id="GO:0006937">
    <property type="term" value="P:regulation of muscle contraction"/>
    <property type="evidence" value="ECO:0000266"/>
    <property type="project" value="RGD"/>
</dbReference>
<dbReference type="GO" id="GO:0006940">
    <property type="term" value="P:regulation of smooth muscle contraction"/>
    <property type="evidence" value="ECO:0000266"/>
    <property type="project" value="RGD"/>
</dbReference>
<dbReference type="GO" id="GO:1905144">
    <property type="term" value="P:response to acetylcholine"/>
    <property type="evidence" value="ECO:0000316"/>
    <property type="project" value="ARUK-UCL"/>
</dbReference>
<dbReference type="GO" id="GO:0034465">
    <property type="term" value="P:response to carbon monoxide"/>
    <property type="evidence" value="ECO:0000270"/>
    <property type="project" value="RGD"/>
</dbReference>
<dbReference type="GO" id="GO:0035094">
    <property type="term" value="P:response to nicotine"/>
    <property type="evidence" value="ECO:0000270"/>
    <property type="project" value="RGD"/>
</dbReference>
<dbReference type="GO" id="GO:0009410">
    <property type="term" value="P:response to xenobiotic stimulus"/>
    <property type="evidence" value="ECO:0000314"/>
    <property type="project" value="RGD"/>
</dbReference>
<dbReference type="GO" id="GO:0007165">
    <property type="term" value="P:signal transduction"/>
    <property type="evidence" value="ECO:0000266"/>
    <property type="project" value="RGD"/>
</dbReference>
<dbReference type="GO" id="GO:0060084">
    <property type="term" value="P:synaptic transmission involved in micturition"/>
    <property type="evidence" value="ECO:0000266"/>
    <property type="project" value="RGD"/>
</dbReference>
<dbReference type="GO" id="GO:0007271">
    <property type="term" value="P:synaptic transmission, cholinergic"/>
    <property type="evidence" value="ECO:0000266"/>
    <property type="project" value="RGD"/>
</dbReference>
<dbReference type="CDD" id="cd19016">
    <property type="entry name" value="LGIC_ECD_nAChR_A3"/>
    <property type="match status" value="1"/>
</dbReference>
<dbReference type="CDD" id="cd19064">
    <property type="entry name" value="LGIC_TM_nAChR"/>
    <property type="match status" value="1"/>
</dbReference>
<dbReference type="FunFam" id="2.70.170.10:FF:000008">
    <property type="entry name" value="Cholinergic receptor nicotinic alpha 6 subunit"/>
    <property type="match status" value="1"/>
</dbReference>
<dbReference type="FunFam" id="1.20.58.390:FF:000017">
    <property type="entry name" value="Neuronal acetylcholine receptor subunit alpha-3"/>
    <property type="match status" value="1"/>
</dbReference>
<dbReference type="FunFam" id="1.20.58.390:FF:000001">
    <property type="entry name" value="Neuronal nicotinic acetylcholine receptor subunit 3"/>
    <property type="match status" value="1"/>
</dbReference>
<dbReference type="Gene3D" id="2.70.170.10">
    <property type="entry name" value="Neurotransmitter-gated ion-channel ligand-binding domain"/>
    <property type="match status" value="1"/>
</dbReference>
<dbReference type="Gene3D" id="1.20.58.390">
    <property type="entry name" value="Neurotransmitter-gated ion-channel transmembrane domain"/>
    <property type="match status" value="2"/>
</dbReference>
<dbReference type="InterPro" id="IPR006202">
    <property type="entry name" value="Neur_chan_lig-bd"/>
</dbReference>
<dbReference type="InterPro" id="IPR036734">
    <property type="entry name" value="Neur_chan_lig-bd_sf"/>
</dbReference>
<dbReference type="InterPro" id="IPR006201">
    <property type="entry name" value="Neur_channel"/>
</dbReference>
<dbReference type="InterPro" id="IPR036719">
    <property type="entry name" value="Neuro-gated_channel_TM_sf"/>
</dbReference>
<dbReference type="InterPro" id="IPR038050">
    <property type="entry name" value="Neuro_actylchol_rec"/>
</dbReference>
<dbReference type="InterPro" id="IPR006029">
    <property type="entry name" value="Neurotrans-gated_channel_TM"/>
</dbReference>
<dbReference type="InterPro" id="IPR018000">
    <property type="entry name" value="Neurotransmitter_ion_chnl_CS"/>
</dbReference>
<dbReference type="InterPro" id="IPR002394">
    <property type="entry name" value="Nicotinic_acetylcholine_rcpt"/>
</dbReference>
<dbReference type="NCBIfam" id="TIGR00860">
    <property type="entry name" value="LIC"/>
    <property type="match status" value="1"/>
</dbReference>
<dbReference type="PANTHER" id="PTHR18945">
    <property type="entry name" value="NEUROTRANSMITTER GATED ION CHANNEL"/>
    <property type="match status" value="1"/>
</dbReference>
<dbReference type="Pfam" id="PF02931">
    <property type="entry name" value="Neur_chan_LBD"/>
    <property type="match status" value="1"/>
</dbReference>
<dbReference type="Pfam" id="PF02932">
    <property type="entry name" value="Neur_chan_memb"/>
    <property type="match status" value="1"/>
</dbReference>
<dbReference type="PRINTS" id="PR00254">
    <property type="entry name" value="NICOTINICR"/>
</dbReference>
<dbReference type="PRINTS" id="PR00252">
    <property type="entry name" value="NRIONCHANNEL"/>
</dbReference>
<dbReference type="SUPFAM" id="SSF90112">
    <property type="entry name" value="Neurotransmitter-gated ion-channel transmembrane pore"/>
    <property type="match status" value="1"/>
</dbReference>
<dbReference type="SUPFAM" id="SSF63712">
    <property type="entry name" value="Nicotinic receptor ligand binding domain-like"/>
    <property type="match status" value="1"/>
</dbReference>
<dbReference type="PROSITE" id="PS00236">
    <property type="entry name" value="NEUROTR_ION_CHANNEL"/>
    <property type="match status" value="1"/>
</dbReference>
<evidence type="ECO:0000250" key="1">
    <source>
        <dbReference type="UniProtKB" id="P02709"/>
    </source>
</evidence>
<evidence type="ECO:0000250" key="2">
    <source>
        <dbReference type="UniProtKB" id="P32297"/>
    </source>
</evidence>
<evidence type="ECO:0000250" key="3">
    <source>
        <dbReference type="UniProtKB" id="Q8R4G9"/>
    </source>
</evidence>
<evidence type="ECO:0000255" key="4"/>
<evidence type="ECO:0000269" key="5">
    <source>
    </source>
</evidence>
<evidence type="ECO:0000269" key="6">
    <source>
    </source>
</evidence>
<evidence type="ECO:0000269" key="7">
    <source>
    </source>
</evidence>
<evidence type="ECO:0000269" key="8">
    <source>
    </source>
</evidence>
<evidence type="ECO:0000269" key="9">
    <source>
    </source>
</evidence>
<evidence type="ECO:0000269" key="10">
    <source>
    </source>
</evidence>
<evidence type="ECO:0000269" key="11">
    <source>
    </source>
</evidence>
<evidence type="ECO:0000269" key="12">
    <source>
    </source>
</evidence>
<evidence type="ECO:0000305" key="13"/>
<evidence type="ECO:0000305" key="14">
    <source>
    </source>
</evidence>
<evidence type="ECO:0007744" key="15">
    <source>
    </source>
</evidence>
<organism>
    <name type="scientific">Rattus norvegicus</name>
    <name type="common">Rat</name>
    <dbReference type="NCBI Taxonomy" id="10116"/>
    <lineage>
        <taxon>Eukaryota</taxon>
        <taxon>Metazoa</taxon>
        <taxon>Chordata</taxon>
        <taxon>Craniata</taxon>
        <taxon>Vertebrata</taxon>
        <taxon>Euteleostomi</taxon>
        <taxon>Mammalia</taxon>
        <taxon>Eutheria</taxon>
        <taxon>Euarchontoglires</taxon>
        <taxon>Glires</taxon>
        <taxon>Rodentia</taxon>
        <taxon>Myomorpha</taxon>
        <taxon>Muroidea</taxon>
        <taxon>Muridae</taxon>
        <taxon>Murinae</taxon>
        <taxon>Rattus</taxon>
    </lineage>
</organism>